<evidence type="ECO:0000255" key="1">
    <source>
        <dbReference type="HAMAP-Rule" id="MF_00636"/>
    </source>
</evidence>
<proteinExistence type="inferred from homology"/>
<reference key="1">
    <citation type="journal article" date="2003" name="Nature">
        <title>The genome sequence of Bacillus anthracis Ames and comparison to closely related bacteria.</title>
        <authorList>
            <person name="Read T.D."/>
            <person name="Peterson S.N."/>
            <person name="Tourasse N.J."/>
            <person name="Baillie L.W."/>
            <person name="Paulsen I.T."/>
            <person name="Nelson K.E."/>
            <person name="Tettelin H."/>
            <person name="Fouts D.E."/>
            <person name="Eisen J.A."/>
            <person name="Gill S.R."/>
            <person name="Holtzapple E.K."/>
            <person name="Okstad O.A."/>
            <person name="Helgason E."/>
            <person name="Rilstone J."/>
            <person name="Wu M."/>
            <person name="Kolonay J.F."/>
            <person name="Beanan M.J."/>
            <person name="Dodson R.J."/>
            <person name="Brinkac L.M."/>
            <person name="Gwinn M.L."/>
            <person name="DeBoy R.T."/>
            <person name="Madpu R."/>
            <person name="Daugherty S.C."/>
            <person name="Durkin A.S."/>
            <person name="Haft D.H."/>
            <person name="Nelson W.C."/>
            <person name="Peterson J.D."/>
            <person name="Pop M."/>
            <person name="Khouri H.M."/>
            <person name="Radune D."/>
            <person name="Benton J.L."/>
            <person name="Mahamoud Y."/>
            <person name="Jiang L."/>
            <person name="Hance I.R."/>
            <person name="Weidman J.F."/>
            <person name="Berry K.J."/>
            <person name="Plaut R.D."/>
            <person name="Wolf A.M."/>
            <person name="Watkins K.L."/>
            <person name="Nierman W.C."/>
            <person name="Hazen A."/>
            <person name="Cline R.T."/>
            <person name="Redmond C."/>
            <person name="Thwaite J.E."/>
            <person name="White O."/>
            <person name="Salzberg S.L."/>
            <person name="Thomason B."/>
            <person name="Friedlander A.M."/>
            <person name="Koehler T.M."/>
            <person name="Hanna P.C."/>
            <person name="Kolstoe A.-B."/>
            <person name="Fraser C.M."/>
        </authorList>
    </citation>
    <scope>NUCLEOTIDE SEQUENCE [LARGE SCALE GENOMIC DNA]</scope>
    <source>
        <strain>Ames / isolate Porton</strain>
    </source>
</reference>
<reference key="2">
    <citation type="journal article" date="2009" name="J. Bacteriol.">
        <title>The complete genome sequence of Bacillus anthracis Ames 'Ancestor'.</title>
        <authorList>
            <person name="Ravel J."/>
            <person name="Jiang L."/>
            <person name="Stanley S.T."/>
            <person name="Wilson M.R."/>
            <person name="Decker R.S."/>
            <person name="Read T.D."/>
            <person name="Worsham P."/>
            <person name="Keim P.S."/>
            <person name="Salzberg S.L."/>
            <person name="Fraser-Liggett C.M."/>
            <person name="Rasko D.A."/>
        </authorList>
    </citation>
    <scope>NUCLEOTIDE SEQUENCE [LARGE SCALE GENOMIC DNA]</scope>
    <source>
        <strain>Ames ancestor</strain>
    </source>
</reference>
<reference key="3">
    <citation type="submission" date="2004-01" db="EMBL/GenBank/DDBJ databases">
        <title>Complete genome sequence of Bacillus anthracis Sterne.</title>
        <authorList>
            <person name="Brettin T.S."/>
            <person name="Bruce D."/>
            <person name="Challacombe J.F."/>
            <person name="Gilna P."/>
            <person name="Han C."/>
            <person name="Hill K."/>
            <person name="Hitchcock P."/>
            <person name="Jackson P."/>
            <person name="Keim P."/>
            <person name="Longmire J."/>
            <person name="Lucas S."/>
            <person name="Okinaka R."/>
            <person name="Richardson P."/>
            <person name="Rubin E."/>
            <person name="Tice H."/>
        </authorList>
    </citation>
    <scope>NUCLEOTIDE SEQUENCE [LARGE SCALE GENOMIC DNA]</scope>
    <source>
        <strain>Sterne</strain>
    </source>
</reference>
<accession>Q81X59</accession>
<accession>Q6HQZ5</accession>
<accession>Q6KKB4</accession>
<sequence>MTENNDIKMVIITGMSGAGKTVALQSFEDLGYFCVDNLPPMLLPKFIELMADSKGKMNKVALGVDLRGREFFEHLWGALDDLSERTWIIPHILFLDAKDSTLVTRYKETRRSHPLAPTGLPLKGIEIERSLLTDMKARANIVLDTSDLKPKELREKIVHLFSTETEQAFRVNVMSFGFKYGIPIDADLVFDVRFLPNPYYIPHMKPLTGLDEEVSSYVLKFNETHKFLEKLTDLITFMLPHYKREGKSQLVIAIGCTGGQHRSVTLTEYLGKHLKPEYSVHVSHRDVEKRKGH</sequence>
<name>Y5384_BACAN</name>
<feature type="chain" id="PRO_0000107681" description="Nucleotide-binding protein BA_5384/GBAA_5384/BAS5004">
    <location>
        <begin position="1"/>
        <end position="293"/>
    </location>
</feature>
<feature type="binding site" evidence="1">
    <location>
        <begin position="14"/>
        <end position="21"/>
    </location>
    <ligand>
        <name>ATP</name>
        <dbReference type="ChEBI" id="CHEBI:30616"/>
    </ligand>
</feature>
<feature type="binding site" evidence="1">
    <location>
        <begin position="65"/>
        <end position="68"/>
    </location>
    <ligand>
        <name>GTP</name>
        <dbReference type="ChEBI" id="CHEBI:37565"/>
    </ligand>
</feature>
<organism>
    <name type="scientific">Bacillus anthracis</name>
    <dbReference type="NCBI Taxonomy" id="1392"/>
    <lineage>
        <taxon>Bacteria</taxon>
        <taxon>Bacillati</taxon>
        <taxon>Bacillota</taxon>
        <taxon>Bacilli</taxon>
        <taxon>Bacillales</taxon>
        <taxon>Bacillaceae</taxon>
        <taxon>Bacillus</taxon>
        <taxon>Bacillus cereus group</taxon>
    </lineage>
</organism>
<keyword id="KW-0067">ATP-binding</keyword>
<keyword id="KW-0342">GTP-binding</keyword>
<keyword id="KW-0547">Nucleotide-binding</keyword>
<keyword id="KW-1185">Reference proteome</keyword>
<comment type="function">
    <text evidence="1">Displays ATPase and GTPase activities.</text>
</comment>
<comment type="similarity">
    <text evidence="1">Belongs to the RapZ-like family.</text>
</comment>
<protein>
    <recommendedName>
        <fullName evidence="1">Nucleotide-binding protein BA_5384/GBAA_5384/BAS5004</fullName>
    </recommendedName>
</protein>
<gene>
    <name type="ordered locus">BA_5384</name>
    <name type="ordered locus">GBAA_5384</name>
    <name type="ordered locus">BAS5004</name>
</gene>
<dbReference type="EMBL" id="AE016879">
    <property type="protein sequence ID" value="AAP29043.1"/>
    <property type="molecule type" value="Genomic_DNA"/>
</dbReference>
<dbReference type="EMBL" id="AE017334">
    <property type="protein sequence ID" value="AAT34518.1"/>
    <property type="molecule type" value="Genomic_DNA"/>
</dbReference>
<dbReference type="EMBL" id="AE017225">
    <property type="protein sequence ID" value="AAT57293.1"/>
    <property type="molecule type" value="Genomic_DNA"/>
</dbReference>
<dbReference type="RefSeq" id="NP_847557.1">
    <property type="nucleotide sequence ID" value="NC_003997.3"/>
</dbReference>
<dbReference type="RefSeq" id="YP_031243.1">
    <property type="nucleotide sequence ID" value="NC_005945.1"/>
</dbReference>
<dbReference type="SMR" id="Q81X59"/>
<dbReference type="STRING" id="261594.GBAA_5384"/>
<dbReference type="DNASU" id="1084932"/>
<dbReference type="GeneID" id="45024987"/>
<dbReference type="KEGG" id="ban:BA_5384"/>
<dbReference type="KEGG" id="bar:GBAA_5384"/>
<dbReference type="KEGG" id="bat:BAS5004"/>
<dbReference type="PATRIC" id="fig|198094.11.peg.5342"/>
<dbReference type="eggNOG" id="COG1660">
    <property type="taxonomic scope" value="Bacteria"/>
</dbReference>
<dbReference type="HOGENOM" id="CLU_059558_0_0_9"/>
<dbReference type="OMA" id="GFKHGVP"/>
<dbReference type="OrthoDB" id="9784461at2"/>
<dbReference type="Proteomes" id="UP000000427">
    <property type="component" value="Chromosome"/>
</dbReference>
<dbReference type="Proteomes" id="UP000000594">
    <property type="component" value="Chromosome"/>
</dbReference>
<dbReference type="GO" id="GO:0005524">
    <property type="term" value="F:ATP binding"/>
    <property type="evidence" value="ECO:0007669"/>
    <property type="project" value="UniProtKB-UniRule"/>
</dbReference>
<dbReference type="GO" id="GO:0005525">
    <property type="term" value="F:GTP binding"/>
    <property type="evidence" value="ECO:0007669"/>
    <property type="project" value="UniProtKB-UniRule"/>
</dbReference>
<dbReference type="Gene3D" id="3.40.50.300">
    <property type="entry name" value="P-loop containing nucleotide triphosphate hydrolases"/>
    <property type="match status" value="1"/>
</dbReference>
<dbReference type="HAMAP" id="MF_00636">
    <property type="entry name" value="RapZ_like"/>
    <property type="match status" value="1"/>
</dbReference>
<dbReference type="InterPro" id="IPR027417">
    <property type="entry name" value="P-loop_NTPase"/>
</dbReference>
<dbReference type="InterPro" id="IPR005337">
    <property type="entry name" value="RapZ-like"/>
</dbReference>
<dbReference type="InterPro" id="IPR053930">
    <property type="entry name" value="RapZ-like_N"/>
</dbReference>
<dbReference type="InterPro" id="IPR053931">
    <property type="entry name" value="RapZ_C"/>
</dbReference>
<dbReference type="NCBIfam" id="NF003828">
    <property type="entry name" value="PRK05416.1"/>
    <property type="match status" value="1"/>
</dbReference>
<dbReference type="PANTHER" id="PTHR30448">
    <property type="entry name" value="RNASE ADAPTER PROTEIN RAPZ"/>
    <property type="match status" value="1"/>
</dbReference>
<dbReference type="PANTHER" id="PTHR30448:SF0">
    <property type="entry name" value="RNASE ADAPTER PROTEIN RAPZ"/>
    <property type="match status" value="1"/>
</dbReference>
<dbReference type="Pfam" id="PF22740">
    <property type="entry name" value="PapZ_C"/>
    <property type="match status" value="1"/>
</dbReference>
<dbReference type="Pfam" id="PF03668">
    <property type="entry name" value="RapZ-like_N"/>
    <property type="match status" value="1"/>
</dbReference>
<dbReference type="PIRSF" id="PIRSF005052">
    <property type="entry name" value="P-loopkin"/>
    <property type="match status" value="1"/>
</dbReference>
<dbReference type="SUPFAM" id="SSF52540">
    <property type="entry name" value="P-loop containing nucleoside triphosphate hydrolases"/>
    <property type="match status" value="1"/>
</dbReference>